<organism>
    <name type="scientific">Porphyromonas gingivalis (strain ATCC BAA-308 / W83)</name>
    <dbReference type="NCBI Taxonomy" id="242619"/>
    <lineage>
        <taxon>Bacteria</taxon>
        <taxon>Pseudomonadati</taxon>
        <taxon>Bacteroidota</taxon>
        <taxon>Bacteroidia</taxon>
        <taxon>Bacteroidales</taxon>
        <taxon>Porphyromonadaceae</taxon>
        <taxon>Porphyromonas</taxon>
    </lineage>
</organism>
<proteinExistence type="inferred from homology"/>
<name>PYRF_PORGI</name>
<reference key="1">
    <citation type="journal article" date="2003" name="J. Bacteriol.">
        <title>Complete genome sequence of the oral pathogenic bacterium Porphyromonas gingivalis strain W83.</title>
        <authorList>
            <person name="Nelson K.E."/>
            <person name="Fleischmann R.D."/>
            <person name="DeBoy R.T."/>
            <person name="Paulsen I.T."/>
            <person name="Fouts D.E."/>
            <person name="Eisen J.A."/>
            <person name="Daugherty S.C."/>
            <person name="Dodson R.J."/>
            <person name="Durkin A.S."/>
            <person name="Gwinn M.L."/>
            <person name="Haft D.H."/>
            <person name="Kolonay J.F."/>
            <person name="Nelson W.C."/>
            <person name="Mason T.M."/>
            <person name="Tallon L."/>
            <person name="Gray J."/>
            <person name="Granger D."/>
            <person name="Tettelin H."/>
            <person name="Dong H."/>
            <person name="Galvin J.L."/>
            <person name="Duncan M.J."/>
            <person name="Dewhirst F.E."/>
            <person name="Fraser C.M."/>
        </authorList>
    </citation>
    <scope>NUCLEOTIDE SEQUENCE [LARGE SCALE GENOMIC DNA]</scope>
    <source>
        <strain>ATCC BAA-308 / W83</strain>
    </source>
</reference>
<accession>Q7MXT6</accession>
<sequence length="276" mass="30572">MTTKELFDRICRKRSFLCVGLDTDVKKIPPHLLNEDDPILAFNKAIIDATAEYCVAFKPNMAFYESMGSFGAHSFEKTIEYIRERYPDQFIIADAKRGDIGNTSDMYARSFFEHLKVDALTVSPYMGEDSISPFLSYAGKFTVLLALTSNKGSQDFQMMRDADGEYLFERVIRISQTWDNAGQLMYVVGATQASMLKDIREIVPDAFLLVPGVGAQGGSLEDVAEYGMNAHCGLLVNASRSIIYADNTEGFAAKAAGEAAAMQRQMEIALRAKALI</sequence>
<protein>
    <recommendedName>
        <fullName evidence="1">Orotidine 5'-phosphate decarboxylase</fullName>
        <ecNumber evidence="1">4.1.1.23</ecNumber>
    </recommendedName>
    <alternativeName>
        <fullName evidence="1">OMP decarboxylase</fullName>
        <shortName evidence="1">OMPDCase</shortName>
        <shortName evidence="1">OMPdecase</shortName>
    </alternativeName>
</protein>
<comment type="catalytic activity">
    <reaction evidence="1">
        <text>orotidine 5'-phosphate + H(+) = UMP + CO2</text>
        <dbReference type="Rhea" id="RHEA:11596"/>
        <dbReference type="ChEBI" id="CHEBI:15378"/>
        <dbReference type="ChEBI" id="CHEBI:16526"/>
        <dbReference type="ChEBI" id="CHEBI:57538"/>
        <dbReference type="ChEBI" id="CHEBI:57865"/>
        <dbReference type="EC" id="4.1.1.23"/>
    </reaction>
</comment>
<comment type="pathway">
    <text evidence="1">Pyrimidine metabolism; UMP biosynthesis via de novo pathway; UMP from orotate: step 2/2.</text>
</comment>
<comment type="similarity">
    <text evidence="1">Belongs to the OMP decarboxylase family. Type 2 subfamily.</text>
</comment>
<feature type="chain" id="PRO_1000138959" description="Orotidine 5'-phosphate decarboxylase">
    <location>
        <begin position="1"/>
        <end position="276"/>
    </location>
</feature>
<feature type="active site" description="Proton donor" evidence="1">
    <location>
        <position position="96"/>
    </location>
</feature>
<dbReference type="EC" id="4.1.1.23" evidence="1"/>
<dbReference type="EMBL" id="AE015924">
    <property type="protein sequence ID" value="AAQ65322.1"/>
    <property type="molecule type" value="Genomic_DNA"/>
</dbReference>
<dbReference type="RefSeq" id="WP_005873952.1">
    <property type="nucleotide sequence ID" value="NC_002950.2"/>
</dbReference>
<dbReference type="SMR" id="Q7MXT6"/>
<dbReference type="STRING" id="242619.PG_0073"/>
<dbReference type="EnsemblBacteria" id="AAQ65322">
    <property type="protein sequence ID" value="AAQ65322"/>
    <property type="gene ID" value="PG_0073"/>
</dbReference>
<dbReference type="KEGG" id="pgi:PG_0073"/>
<dbReference type="eggNOG" id="COG0284">
    <property type="taxonomic scope" value="Bacteria"/>
</dbReference>
<dbReference type="HOGENOM" id="CLU_060704_1_0_10"/>
<dbReference type="UniPathway" id="UPA00070">
    <property type="reaction ID" value="UER00120"/>
</dbReference>
<dbReference type="Proteomes" id="UP000000588">
    <property type="component" value="Chromosome"/>
</dbReference>
<dbReference type="GO" id="GO:0004590">
    <property type="term" value="F:orotidine-5'-phosphate decarboxylase activity"/>
    <property type="evidence" value="ECO:0007669"/>
    <property type="project" value="UniProtKB-UniRule"/>
</dbReference>
<dbReference type="GO" id="GO:0006207">
    <property type="term" value="P:'de novo' pyrimidine nucleobase biosynthetic process"/>
    <property type="evidence" value="ECO:0007669"/>
    <property type="project" value="InterPro"/>
</dbReference>
<dbReference type="GO" id="GO:0044205">
    <property type="term" value="P:'de novo' UMP biosynthetic process"/>
    <property type="evidence" value="ECO:0007669"/>
    <property type="project" value="UniProtKB-UniRule"/>
</dbReference>
<dbReference type="CDD" id="cd04725">
    <property type="entry name" value="OMP_decarboxylase_like"/>
    <property type="match status" value="1"/>
</dbReference>
<dbReference type="FunFam" id="3.20.20.70:FF:000157">
    <property type="entry name" value="Orotidine 5'-phosphate decarboxylase"/>
    <property type="match status" value="1"/>
</dbReference>
<dbReference type="Gene3D" id="3.20.20.70">
    <property type="entry name" value="Aldolase class I"/>
    <property type="match status" value="1"/>
</dbReference>
<dbReference type="HAMAP" id="MF_01215">
    <property type="entry name" value="OMPdecase_type2"/>
    <property type="match status" value="1"/>
</dbReference>
<dbReference type="InterPro" id="IPR013785">
    <property type="entry name" value="Aldolase_TIM"/>
</dbReference>
<dbReference type="InterPro" id="IPR011995">
    <property type="entry name" value="OMPdecase_type-2"/>
</dbReference>
<dbReference type="InterPro" id="IPR001754">
    <property type="entry name" value="OMPdeCOase_dom"/>
</dbReference>
<dbReference type="InterPro" id="IPR011060">
    <property type="entry name" value="RibuloseP-bd_barrel"/>
</dbReference>
<dbReference type="NCBIfam" id="TIGR02127">
    <property type="entry name" value="pyrF_sub2"/>
    <property type="match status" value="1"/>
</dbReference>
<dbReference type="PANTHER" id="PTHR43375">
    <property type="entry name" value="OROTIDINE 5'-PHOSPHATE DECARBOXYLASE"/>
    <property type="match status" value="1"/>
</dbReference>
<dbReference type="PANTHER" id="PTHR43375:SF1">
    <property type="entry name" value="OROTIDINE 5'-PHOSPHATE DECARBOXYLASE"/>
    <property type="match status" value="1"/>
</dbReference>
<dbReference type="Pfam" id="PF00215">
    <property type="entry name" value="OMPdecase"/>
    <property type="match status" value="1"/>
</dbReference>
<dbReference type="SMART" id="SM00934">
    <property type="entry name" value="OMPdecase"/>
    <property type="match status" value="1"/>
</dbReference>
<dbReference type="SUPFAM" id="SSF51366">
    <property type="entry name" value="Ribulose-phoshate binding barrel"/>
    <property type="match status" value="1"/>
</dbReference>
<evidence type="ECO:0000255" key="1">
    <source>
        <dbReference type="HAMAP-Rule" id="MF_01215"/>
    </source>
</evidence>
<gene>
    <name evidence="1" type="primary">pyrF</name>
    <name type="ordered locus">PG_0073</name>
</gene>
<keyword id="KW-0210">Decarboxylase</keyword>
<keyword id="KW-0456">Lyase</keyword>
<keyword id="KW-0665">Pyrimidine biosynthesis</keyword>
<keyword id="KW-1185">Reference proteome</keyword>